<keyword id="KW-0694">RNA-binding</keyword>
<keyword id="KW-0804">Transcription</keyword>
<keyword id="KW-0889">Transcription antitermination</keyword>
<keyword id="KW-0805">Transcription regulation</keyword>
<name>NUSB_BURM7</name>
<comment type="function">
    <text evidence="1">Involved in transcription antitermination. Required for transcription of ribosomal RNA (rRNA) genes. Binds specifically to the boxA antiterminator sequence of the ribosomal RNA (rrn) operons.</text>
</comment>
<comment type="similarity">
    <text evidence="1">Belongs to the NusB family.</text>
</comment>
<sequence>MKKSARRQSRELATQGLYQWLLSNAAPGEIDAQLRGALGYDKADKTLLDTILHGVIREHATLAEAISPSLDRPIDQLSPVERAVLLIATYELTHQIETPYRVIINEAVELAKTFGGSDGYKYVNGVLDKLAVKLRPAETQARRGA</sequence>
<reference key="1">
    <citation type="journal article" date="2010" name="Genome Biol. Evol.">
        <title>Continuing evolution of Burkholderia mallei through genome reduction and large-scale rearrangements.</title>
        <authorList>
            <person name="Losada L."/>
            <person name="Ronning C.M."/>
            <person name="DeShazer D."/>
            <person name="Woods D."/>
            <person name="Fedorova N."/>
            <person name="Kim H.S."/>
            <person name="Shabalina S.A."/>
            <person name="Pearson T.R."/>
            <person name="Brinkac L."/>
            <person name="Tan P."/>
            <person name="Nandi T."/>
            <person name="Crabtree J."/>
            <person name="Badger J."/>
            <person name="Beckstrom-Sternberg S."/>
            <person name="Saqib M."/>
            <person name="Schutzer S.E."/>
            <person name="Keim P."/>
            <person name="Nierman W.C."/>
        </authorList>
    </citation>
    <scope>NUCLEOTIDE SEQUENCE [LARGE SCALE GENOMIC DNA]</scope>
    <source>
        <strain>NCTC 10247</strain>
    </source>
</reference>
<evidence type="ECO:0000255" key="1">
    <source>
        <dbReference type="HAMAP-Rule" id="MF_00073"/>
    </source>
</evidence>
<protein>
    <recommendedName>
        <fullName evidence="1">Transcription antitermination protein NusB</fullName>
    </recommendedName>
    <alternativeName>
        <fullName evidence="1">Antitermination factor NusB</fullName>
    </alternativeName>
</protein>
<organism>
    <name type="scientific">Burkholderia mallei (strain NCTC 10247)</name>
    <dbReference type="NCBI Taxonomy" id="320389"/>
    <lineage>
        <taxon>Bacteria</taxon>
        <taxon>Pseudomonadati</taxon>
        <taxon>Pseudomonadota</taxon>
        <taxon>Betaproteobacteria</taxon>
        <taxon>Burkholderiales</taxon>
        <taxon>Burkholderiaceae</taxon>
        <taxon>Burkholderia</taxon>
        <taxon>pseudomallei group</taxon>
    </lineage>
</organism>
<feature type="chain" id="PRO_1000023713" description="Transcription antitermination protein NusB">
    <location>
        <begin position="1"/>
        <end position="145"/>
    </location>
</feature>
<gene>
    <name evidence="1" type="primary">nusB</name>
    <name type="ordered locus">BMA10247_2018</name>
</gene>
<accession>A3MMR4</accession>
<proteinExistence type="inferred from homology"/>
<dbReference type="EMBL" id="CP000548">
    <property type="protein sequence ID" value="ABO04462.1"/>
    <property type="molecule type" value="Genomic_DNA"/>
</dbReference>
<dbReference type="RefSeq" id="WP_004185707.1">
    <property type="nucleotide sequence ID" value="NZ_CP007802.1"/>
</dbReference>
<dbReference type="SMR" id="A3MMR4"/>
<dbReference type="GeneID" id="93061205"/>
<dbReference type="KEGG" id="bmaz:BM44_1204"/>
<dbReference type="KEGG" id="bmn:BMA10247_2018"/>
<dbReference type="PATRIC" id="fig|320389.8.peg.1345"/>
<dbReference type="GO" id="GO:0005829">
    <property type="term" value="C:cytosol"/>
    <property type="evidence" value="ECO:0007669"/>
    <property type="project" value="TreeGrafter"/>
</dbReference>
<dbReference type="GO" id="GO:0003723">
    <property type="term" value="F:RNA binding"/>
    <property type="evidence" value="ECO:0007669"/>
    <property type="project" value="UniProtKB-UniRule"/>
</dbReference>
<dbReference type="GO" id="GO:0006353">
    <property type="term" value="P:DNA-templated transcription termination"/>
    <property type="evidence" value="ECO:0007669"/>
    <property type="project" value="UniProtKB-UniRule"/>
</dbReference>
<dbReference type="GO" id="GO:0031564">
    <property type="term" value="P:transcription antitermination"/>
    <property type="evidence" value="ECO:0007669"/>
    <property type="project" value="UniProtKB-KW"/>
</dbReference>
<dbReference type="Gene3D" id="1.10.940.10">
    <property type="entry name" value="NusB-like"/>
    <property type="match status" value="1"/>
</dbReference>
<dbReference type="HAMAP" id="MF_00073">
    <property type="entry name" value="NusB"/>
    <property type="match status" value="1"/>
</dbReference>
<dbReference type="InterPro" id="IPR035926">
    <property type="entry name" value="NusB-like_sf"/>
</dbReference>
<dbReference type="InterPro" id="IPR011605">
    <property type="entry name" value="NusB_fam"/>
</dbReference>
<dbReference type="InterPro" id="IPR006027">
    <property type="entry name" value="NusB_RsmB_TIM44"/>
</dbReference>
<dbReference type="NCBIfam" id="TIGR01951">
    <property type="entry name" value="nusB"/>
    <property type="match status" value="1"/>
</dbReference>
<dbReference type="PANTHER" id="PTHR11078:SF3">
    <property type="entry name" value="ANTITERMINATION NUSB DOMAIN-CONTAINING PROTEIN"/>
    <property type="match status" value="1"/>
</dbReference>
<dbReference type="PANTHER" id="PTHR11078">
    <property type="entry name" value="N UTILIZATION SUBSTANCE PROTEIN B-RELATED"/>
    <property type="match status" value="1"/>
</dbReference>
<dbReference type="Pfam" id="PF01029">
    <property type="entry name" value="NusB"/>
    <property type="match status" value="1"/>
</dbReference>
<dbReference type="SUPFAM" id="SSF48013">
    <property type="entry name" value="NusB-like"/>
    <property type="match status" value="1"/>
</dbReference>